<accession>P0A6T2</accession>
<accession>P11537</accession>
<comment type="function">
    <text evidence="1">Catalyzes the reversible isomerization of glucose-6-phosphate to fructose-6-phosphate.</text>
</comment>
<comment type="catalytic activity">
    <reaction evidence="1">
        <text>alpha-D-glucose 6-phosphate = beta-D-fructose 6-phosphate</text>
        <dbReference type="Rhea" id="RHEA:11816"/>
        <dbReference type="ChEBI" id="CHEBI:57634"/>
        <dbReference type="ChEBI" id="CHEBI:58225"/>
        <dbReference type="EC" id="5.3.1.9"/>
    </reaction>
</comment>
<comment type="pathway">
    <text evidence="1">Carbohydrate biosynthesis; gluconeogenesis.</text>
</comment>
<comment type="pathway">
    <text evidence="1">Carbohydrate degradation; glycolysis; D-glyceraldehyde 3-phosphate and glycerone phosphate from D-glucose: step 2/4.</text>
</comment>
<comment type="subcellular location">
    <subcellularLocation>
        <location evidence="1">Cytoplasm</location>
    </subcellularLocation>
</comment>
<comment type="similarity">
    <text evidence="1 2">Belongs to the GPI family.</text>
</comment>
<dbReference type="EC" id="5.3.1.9" evidence="1"/>
<dbReference type="EMBL" id="AE005174">
    <property type="protein sequence ID" value="AAG59224.1"/>
    <property type="molecule type" value="Genomic_DNA"/>
</dbReference>
<dbReference type="EMBL" id="BA000007">
    <property type="protein sequence ID" value="BAB38431.1"/>
    <property type="molecule type" value="Genomic_DNA"/>
</dbReference>
<dbReference type="PIR" id="D86095">
    <property type="entry name" value="D86095"/>
</dbReference>
<dbReference type="PIR" id="H91254">
    <property type="entry name" value="H91254"/>
</dbReference>
<dbReference type="RefSeq" id="NP_313035.1">
    <property type="nucleotide sequence ID" value="NC_002695.1"/>
</dbReference>
<dbReference type="RefSeq" id="WP_000789986.1">
    <property type="nucleotide sequence ID" value="NZ_VOAI01000027.1"/>
</dbReference>
<dbReference type="SMR" id="P0A6T2"/>
<dbReference type="STRING" id="155864.Z5623"/>
<dbReference type="GeneID" id="914328"/>
<dbReference type="GeneID" id="93777863"/>
<dbReference type="KEGG" id="ece:Z5623"/>
<dbReference type="KEGG" id="ecs:ECs_5008"/>
<dbReference type="PATRIC" id="fig|386585.9.peg.5229"/>
<dbReference type="eggNOG" id="COG0166">
    <property type="taxonomic scope" value="Bacteria"/>
</dbReference>
<dbReference type="HOGENOM" id="CLU_017947_3_1_6"/>
<dbReference type="OMA" id="DWYRQLW"/>
<dbReference type="UniPathway" id="UPA00109">
    <property type="reaction ID" value="UER00181"/>
</dbReference>
<dbReference type="UniPathway" id="UPA00138"/>
<dbReference type="Proteomes" id="UP000000558">
    <property type="component" value="Chromosome"/>
</dbReference>
<dbReference type="Proteomes" id="UP000002519">
    <property type="component" value="Chromosome"/>
</dbReference>
<dbReference type="GO" id="GO:0005829">
    <property type="term" value="C:cytosol"/>
    <property type="evidence" value="ECO:0007669"/>
    <property type="project" value="TreeGrafter"/>
</dbReference>
<dbReference type="GO" id="GO:0097367">
    <property type="term" value="F:carbohydrate derivative binding"/>
    <property type="evidence" value="ECO:0007669"/>
    <property type="project" value="InterPro"/>
</dbReference>
<dbReference type="GO" id="GO:0004347">
    <property type="term" value="F:glucose-6-phosphate isomerase activity"/>
    <property type="evidence" value="ECO:0007669"/>
    <property type="project" value="UniProtKB-UniRule"/>
</dbReference>
<dbReference type="GO" id="GO:0048029">
    <property type="term" value="F:monosaccharide binding"/>
    <property type="evidence" value="ECO:0007669"/>
    <property type="project" value="TreeGrafter"/>
</dbReference>
<dbReference type="GO" id="GO:0006094">
    <property type="term" value="P:gluconeogenesis"/>
    <property type="evidence" value="ECO:0007669"/>
    <property type="project" value="UniProtKB-UniRule"/>
</dbReference>
<dbReference type="GO" id="GO:0051156">
    <property type="term" value="P:glucose 6-phosphate metabolic process"/>
    <property type="evidence" value="ECO:0007669"/>
    <property type="project" value="TreeGrafter"/>
</dbReference>
<dbReference type="GO" id="GO:0006096">
    <property type="term" value="P:glycolytic process"/>
    <property type="evidence" value="ECO:0007669"/>
    <property type="project" value="UniProtKB-UniRule"/>
</dbReference>
<dbReference type="CDD" id="cd05015">
    <property type="entry name" value="SIS_PGI_1"/>
    <property type="match status" value="1"/>
</dbReference>
<dbReference type="CDD" id="cd05016">
    <property type="entry name" value="SIS_PGI_2"/>
    <property type="match status" value="1"/>
</dbReference>
<dbReference type="FunFam" id="1.10.1390.10:FF:000001">
    <property type="entry name" value="Glucose-6-phosphate isomerase"/>
    <property type="match status" value="1"/>
</dbReference>
<dbReference type="FunFam" id="3.40.50.10490:FF:000004">
    <property type="entry name" value="Glucose-6-phosphate isomerase"/>
    <property type="match status" value="1"/>
</dbReference>
<dbReference type="Gene3D" id="1.10.1390.10">
    <property type="match status" value="1"/>
</dbReference>
<dbReference type="Gene3D" id="3.40.50.10490">
    <property type="entry name" value="Glucose-6-phosphate isomerase like protein, domain 1"/>
    <property type="match status" value="2"/>
</dbReference>
<dbReference type="HAMAP" id="MF_00473">
    <property type="entry name" value="G6P_isomerase"/>
    <property type="match status" value="1"/>
</dbReference>
<dbReference type="InterPro" id="IPR001672">
    <property type="entry name" value="G6P_Isomerase"/>
</dbReference>
<dbReference type="InterPro" id="IPR023096">
    <property type="entry name" value="G6P_Isomerase_C"/>
</dbReference>
<dbReference type="InterPro" id="IPR018189">
    <property type="entry name" value="Phosphoglucose_isomerase_CS"/>
</dbReference>
<dbReference type="InterPro" id="IPR046348">
    <property type="entry name" value="SIS_dom_sf"/>
</dbReference>
<dbReference type="InterPro" id="IPR035476">
    <property type="entry name" value="SIS_PGI_1"/>
</dbReference>
<dbReference type="InterPro" id="IPR035482">
    <property type="entry name" value="SIS_PGI_2"/>
</dbReference>
<dbReference type="NCBIfam" id="NF001211">
    <property type="entry name" value="PRK00179.1"/>
    <property type="match status" value="1"/>
</dbReference>
<dbReference type="PANTHER" id="PTHR11469">
    <property type="entry name" value="GLUCOSE-6-PHOSPHATE ISOMERASE"/>
    <property type="match status" value="1"/>
</dbReference>
<dbReference type="PANTHER" id="PTHR11469:SF1">
    <property type="entry name" value="GLUCOSE-6-PHOSPHATE ISOMERASE"/>
    <property type="match status" value="1"/>
</dbReference>
<dbReference type="Pfam" id="PF00342">
    <property type="entry name" value="PGI"/>
    <property type="match status" value="1"/>
</dbReference>
<dbReference type="PRINTS" id="PR00662">
    <property type="entry name" value="G6PISOMERASE"/>
</dbReference>
<dbReference type="SUPFAM" id="SSF53697">
    <property type="entry name" value="SIS domain"/>
    <property type="match status" value="1"/>
</dbReference>
<dbReference type="PROSITE" id="PS00765">
    <property type="entry name" value="P_GLUCOSE_ISOMERASE_1"/>
    <property type="match status" value="1"/>
</dbReference>
<dbReference type="PROSITE" id="PS00174">
    <property type="entry name" value="P_GLUCOSE_ISOMERASE_2"/>
    <property type="match status" value="1"/>
</dbReference>
<dbReference type="PROSITE" id="PS51463">
    <property type="entry name" value="P_GLUCOSE_ISOMERASE_3"/>
    <property type="match status" value="1"/>
</dbReference>
<evidence type="ECO:0000255" key="1">
    <source>
        <dbReference type="HAMAP-Rule" id="MF_00473"/>
    </source>
</evidence>
<evidence type="ECO:0000305" key="2"/>
<name>G6PI_ECO57</name>
<reference key="1">
    <citation type="journal article" date="2001" name="Nature">
        <title>Genome sequence of enterohaemorrhagic Escherichia coli O157:H7.</title>
        <authorList>
            <person name="Perna N.T."/>
            <person name="Plunkett G. III"/>
            <person name="Burland V."/>
            <person name="Mau B."/>
            <person name="Glasner J.D."/>
            <person name="Rose D.J."/>
            <person name="Mayhew G.F."/>
            <person name="Evans P.S."/>
            <person name="Gregor J."/>
            <person name="Kirkpatrick H.A."/>
            <person name="Posfai G."/>
            <person name="Hackett J."/>
            <person name="Klink S."/>
            <person name="Boutin A."/>
            <person name="Shao Y."/>
            <person name="Miller L."/>
            <person name="Grotbeck E.J."/>
            <person name="Davis N.W."/>
            <person name="Lim A."/>
            <person name="Dimalanta E.T."/>
            <person name="Potamousis K."/>
            <person name="Apodaca J."/>
            <person name="Anantharaman T.S."/>
            <person name="Lin J."/>
            <person name="Yen G."/>
            <person name="Schwartz D.C."/>
            <person name="Welch R.A."/>
            <person name="Blattner F.R."/>
        </authorList>
    </citation>
    <scope>NUCLEOTIDE SEQUENCE [LARGE SCALE GENOMIC DNA]</scope>
    <source>
        <strain>O157:H7 / EDL933 / ATCC 700927 / EHEC</strain>
    </source>
</reference>
<reference key="2">
    <citation type="journal article" date="2001" name="DNA Res.">
        <title>Complete genome sequence of enterohemorrhagic Escherichia coli O157:H7 and genomic comparison with a laboratory strain K-12.</title>
        <authorList>
            <person name="Hayashi T."/>
            <person name="Makino K."/>
            <person name="Ohnishi M."/>
            <person name="Kurokawa K."/>
            <person name="Ishii K."/>
            <person name="Yokoyama K."/>
            <person name="Han C.-G."/>
            <person name="Ohtsubo E."/>
            <person name="Nakayama K."/>
            <person name="Murata T."/>
            <person name="Tanaka M."/>
            <person name="Tobe T."/>
            <person name="Iida T."/>
            <person name="Takami H."/>
            <person name="Honda T."/>
            <person name="Sasakawa C."/>
            <person name="Ogasawara N."/>
            <person name="Yasunaga T."/>
            <person name="Kuhara S."/>
            <person name="Shiba T."/>
            <person name="Hattori M."/>
            <person name="Shinagawa H."/>
        </authorList>
    </citation>
    <scope>NUCLEOTIDE SEQUENCE [LARGE SCALE GENOMIC DNA]</scope>
    <source>
        <strain>O157:H7 / Sakai / RIMD 0509952 / EHEC</strain>
    </source>
</reference>
<feature type="chain" id="PRO_0000180642" description="Glucose-6-phosphate isomerase">
    <location>
        <begin position="1"/>
        <end position="549"/>
    </location>
</feature>
<feature type="active site" description="Proton donor" evidence="1">
    <location>
        <position position="355"/>
    </location>
</feature>
<feature type="active site" evidence="1">
    <location>
        <position position="386"/>
    </location>
</feature>
<feature type="active site" evidence="1">
    <location>
        <position position="514"/>
    </location>
</feature>
<feature type="modified residue" description="N6-acetyllysine" evidence="1">
    <location>
        <position position="80"/>
    </location>
</feature>
<feature type="modified residue" description="N6-acetyllysine" evidence="1">
    <location>
        <position position="228"/>
    </location>
</feature>
<feature type="modified residue" description="N6-acetyllysine" evidence="1">
    <location>
        <position position="234"/>
    </location>
</feature>
<organism>
    <name type="scientific">Escherichia coli O157:H7</name>
    <dbReference type="NCBI Taxonomy" id="83334"/>
    <lineage>
        <taxon>Bacteria</taxon>
        <taxon>Pseudomonadati</taxon>
        <taxon>Pseudomonadota</taxon>
        <taxon>Gammaproteobacteria</taxon>
        <taxon>Enterobacterales</taxon>
        <taxon>Enterobacteriaceae</taxon>
        <taxon>Escherichia</taxon>
    </lineage>
</organism>
<gene>
    <name evidence="1" type="primary">pgi</name>
    <name type="ordered locus">Z5623</name>
    <name type="ordered locus">ECs5008</name>
</gene>
<proteinExistence type="inferred from homology"/>
<protein>
    <recommendedName>
        <fullName evidence="1">Glucose-6-phosphate isomerase</fullName>
        <shortName evidence="1">GPI</shortName>
        <ecNumber evidence="1">5.3.1.9</ecNumber>
    </recommendedName>
    <alternativeName>
        <fullName evidence="1">Phosphoglucose isomerase</fullName>
        <shortName evidence="1">PGI</shortName>
    </alternativeName>
    <alternativeName>
        <fullName evidence="1">Phosphohexose isomerase</fullName>
        <shortName evidence="1">PHI</shortName>
    </alternativeName>
</protein>
<sequence length="549" mass="61530">MKNINPTQTAAWQALQKHFDEMKDVTIADLFAKDGDRFSKFSATFDDQMLVDYSKNRITEETLAKLQDLAKECDLAGAIKSMFSGEKINRTENRAVLHVALRNRSNTPILVDGKDVMPEVNAVLEKMKTFSEAIISGEWKGYTGKAITDVVNIGIGGSDLGPYMVTEALRPYKNHLNMHFVSNVDGTHIAEVLKKVNPETTLFLVASKTFTTQETMTNAHSARDWFLKAAGDEKHVAKHFAALSTNAKAVGEFGIDTANMFEFWDWVGGRYSLWSAIGLSIVLSIGFDNFVELLSGAHAMDKHFSTTPAEKNLPVLLALIGIWYNNFFGAETEAILPYDQYMHRFAAYFQQGNMESNGKYVDRNGNVVDYQTGPIIWGEPGTNGQHAFYQLIHQGTKMVPCDFIAPAITHNPLSDHHQKLLSNFFAQTEALAFGKSREVVEQEYRDQGKDPATLDYVVPFKVFEGNRPTNSILLREITPFSLGALIALYEHKIFTQGVILNIFTFDQWGVELGKQLANRILPELKDDKEISSHDSSTNGLINRYKAWRG</sequence>
<keyword id="KW-0007">Acetylation</keyword>
<keyword id="KW-0963">Cytoplasm</keyword>
<keyword id="KW-0312">Gluconeogenesis</keyword>
<keyword id="KW-0324">Glycolysis</keyword>
<keyword id="KW-0413">Isomerase</keyword>
<keyword id="KW-1185">Reference proteome</keyword>